<sequence length="80" mass="8931">MKTGVKKLKVHVKKNDMVTVISGNDKGKSGKVLRVYPVKGRVIVEGVNIRKRHMRPTQSSPQGQIIEREFPVHASNVKKG</sequence>
<gene>
    <name evidence="1" type="primary">rplX</name>
    <name type="ordered locus">Cvib_0257</name>
</gene>
<feature type="chain" id="PRO_0000355713" description="Large ribosomal subunit protein uL24">
    <location>
        <begin position="1"/>
        <end position="80"/>
    </location>
</feature>
<name>RL24_CHLPM</name>
<dbReference type="EMBL" id="CP000607">
    <property type="protein sequence ID" value="ABP36279.1"/>
    <property type="molecule type" value="Genomic_DNA"/>
</dbReference>
<dbReference type="SMR" id="A4SCS0"/>
<dbReference type="STRING" id="290318.Cvib_0257"/>
<dbReference type="KEGG" id="pvi:Cvib_0257"/>
<dbReference type="eggNOG" id="COG0198">
    <property type="taxonomic scope" value="Bacteria"/>
</dbReference>
<dbReference type="HOGENOM" id="CLU_093315_3_0_10"/>
<dbReference type="OrthoDB" id="9807419at2"/>
<dbReference type="GO" id="GO:1990904">
    <property type="term" value="C:ribonucleoprotein complex"/>
    <property type="evidence" value="ECO:0007669"/>
    <property type="project" value="UniProtKB-KW"/>
</dbReference>
<dbReference type="GO" id="GO:0005840">
    <property type="term" value="C:ribosome"/>
    <property type="evidence" value="ECO:0007669"/>
    <property type="project" value="UniProtKB-KW"/>
</dbReference>
<dbReference type="GO" id="GO:0019843">
    <property type="term" value="F:rRNA binding"/>
    <property type="evidence" value="ECO:0007669"/>
    <property type="project" value="UniProtKB-UniRule"/>
</dbReference>
<dbReference type="GO" id="GO:0003735">
    <property type="term" value="F:structural constituent of ribosome"/>
    <property type="evidence" value="ECO:0007669"/>
    <property type="project" value="InterPro"/>
</dbReference>
<dbReference type="GO" id="GO:0006412">
    <property type="term" value="P:translation"/>
    <property type="evidence" value="ECO:0007669"/>
    <property type="project" value="UniProtKB-UniRule"/>
</dbReference>
<dbReference type="CDD" id="cd06089">
    <property type="entry name" value="KOW_RPL26"/>
    <property type="match status" value="1"/>
</dbReference>
<dbReference type="Gene3D" id="2.30.30.30">
    <property type="match status" value="1"/>
</dbReference>
<dbReference type="HAMAP" id="MF_01326_B">
    <property type="entry name" value="Ribosomal_uL24_B"/>
    <property type="match status" value="1"/>
</dbReference>
<dbReference type="InterPro" id="IPR005824">
    <property type="entry name" value="KOW"/>
</dbReference>
<dbReference type="InterPro" id="IPR014722">
    <property type="entry name" value="Rib_uL2_dom2"/>
</dbReference>
<dbReference type="InterPro" id="IPR003256">
    <property type="entry name" value="Ribosomal_uL24"/>
</dbReference>
<dbReference type="InterPro" id="IPR005825">
    <property type="entry name" value="Ribosomal_uL24_CS"/>
</dbReference>
<dbReference type="InterPro" id="IPR041988">
    <property type="entry name" value="Ribosomal_uL24_KOW"/>
</dbReference>
<dbReference type="InterPro" id="IPR008991">
    <property type="entry name" value="Translation_prot_SH3-like_sf"/>
</dbReference>
<dbReference type="NCBIfam" id="TIGR01079">
    <property type="entry name" value="rplX_bact"/>
    <property type="match status" value="1"/>
</dbReference>
<dbReference type="PANTHER" id="PTHR12903">
    <property type="entry name" value="MITOCHONDRIAL RIBOSOMAL PROTEIN L24"/>
    <property type="match status" value="1"/>
</dbReference>
<dbReference type="Pfam" id="PF00467">
    <property type="entry name" value="KOW"/>
    <property type="match status" value="1"/>
</dbReference>
<dbReference type="Pfam" id="PF17136">
    <property type="entry name" value="ribosomal_L24"/>
    <property type="match status" value="1"/>
</dbReference>
<dbReference type="SMART" id="SM00739">
    <property type="entry name" value="KOW"/>
    <property type="match status" value="1"/>
</dbReference>
<dbReference type="SUPFAM" id="SSF50104">
    <property type="entry name" value="Translation proteins SH3-like domain"/>
    <property type="match status" value="1"/>
</dbReference>
<dbReference type="PROSITE" id="PS01108">
    <property type="entry name" value="RIBOSOMAL_L24"/>
    <property type="match status" value="1"/>
</dbReference>
<evidence type="ECO:0000255" key="1">
    <source>
        <dbReference type="HAMAP-Rule" id="MF_01326"/>
    </source>
</evidence>
<evidence type="ECO:0000305" key="2"/>
<protein>
    <recommendedName>
        <fullName evidence="1">Large ribosomal subunit protein uL24</fullName>
    </recommendedName>
    <alternativeName>
        <fullName evidence="2">50S ribosomal protein L24</fullName>
    </alternativeName>
</protein>
<organism>
    <name type="scientific">Chlorobium phaeovibrioides (strain DSM 265 / 1930)</name>
    <name type="common">Prosthecochloris vibrioformis (strain DSM 265)</name>
    <dbReference type="NCBI Taxonomy" id="290318"/>
    <lineage>
        <taxon>Bacteria</taxon>
        <taxon>Pseudomonadati</taxon>
        <taxon>Chlorobiota</taxon>
        <taxon>Chlorobiia</taxon>
        <taxon>Chlorobiales</taxon>
        <taxon>Chlorobiaceae</taxon>
        <taxon>Chlorobium/Pelodictyon group</taxon>
        <taxon>Chlorobium</taxon>
    </lineage>
</organism>
<reference key="1">
    <citation type="submission" date="2007-03" db="EMBL/GenBank/DDBJ databases">
        <title>Complete sequence of Prosthecochloris vibrioformis DSM 265.</title>
        <authorList>
            <consortium name="US DOE Joint Genome Institute"/>
            <person name="Copeland A."/>
            <person name="Lucas S."/>
            <person name="Lapidus A."/>
            <person name="Barry K."/>
            <person name="Detter J.C."/>
            <person name="Glavina del Rio T."/>
            <person name="Hammon N."/>
            <person name="Israni S."/>
            <person name="Pitluck S."/>
            <person name="Schmutz J."/>
            <person name="Larimer F."/>
            <person name="Land M."/>
            <person name="Hauser L."/>
            <person name="Mikhailova N."/>
            <person name="Li T."/>
            <person name="Overmann J."/>
            <person name="Schuster S.C."/>
            <person name="Bryant D.A."/>
            <person name="Richardson P."/>
        </authorList>
    </citation>
    <scope>NUCLEOTIDE SEQUENCE [LARGE SCALE GENOMIC DNA]</scope>
    <source>
        <strain>DSM 265 / 1930</strain>
    </source>
</reference>
<keyword id="KW-0687">Ribonucleoprotein</keyword>
<keyword id="KW-0689">Ribosomal protein</keyword>
<keyword id="KW-0694">RNA-binding</keyword>
<keyword id="KW-0699">rRNA-binding</keyword>
<comment type="function">
    <text evidence="1">One of two assembly initiator proteins, it binds directly to the 5'-end of the 23S rRNA, where it nucleates assembly of the 50S subunit.</text>
</comment>
<comment type="function">
    <text evidence="1">One of the proteins that surrounds the polypeptide exit tunnel on the outside of the subunit.</text>
</comment>
<comment type="subunit">
    <text evidence="1">Part of the 50S ribosomal subunit.</text>
</comment>
<comment type="similarity">
    <text evidence="1">Belongs to the universal ribosomal protein uL24 family.</text>
</comment>
<accession>A4SCS0</accession>
<proteinExistence type="inferred from homology"/>